<feature type="chain" id="PRO_0000085335" description="Virion infectivity factor">
    <location>
        <begin position="1"/>
        <end position="238"/>
    </location>
</feature>
<feature type="region of interest" description="Multimerization" evidence="1">
    <location>
        <begin position="159"/>
        <end position="175"/>
    </location>
</feature>
<feature type="region of interest" description="Disordered" evidence="2">
    <location>
        <begin position="188"/>
        <end position="214"/>
    </location>
</feature>
<feature type="short sequence motif" description="HCCH motif" evidence="1">
    <location>
        <begin position="111"/>
        <end position="146"/>
    </location>
</feature>
<feature type="short sequence motif" description="BC-box-like motif" evidence="1">
    <location>
        <begin position="152"/>
        <end position="161"/>
    </location>
</feature>
<feature type="modified residue" description="Phosphothreonine; by host" evidence="1">
    <location>
        <position position="99"/>
    </location>
</feature>
<feature type="modified residue" description="Phosphoserine; by host" evidence="1">
    <location>
        <position position="152"/>
    </location>
</feature>
<feature type="mutagenesis site" description="Complete loss of interaction with CUL5." evidence="3">
    <original>H</original>
    <variation>L</variation>
    <location>
        <position position="111"/>
    </location>
</feature>
<feature type="mutagenesis site" description="Complete loss of interaction with CUL5." evidence="3">
    <original>C</original>
    <variation>S</variation>
    <location>
        <position position="117"/>
    </location>
</feature>
<feature type="mutagenesis site" description="Complete loss of interaction with CUL5." evidence="3">
    <original>C</original>
    <variation>S</variation>
    <location>
        <position position="135"/>
    </location>
</feature>
<feature type="mutagenesis site" description="Complete loss of interaction with CUL5." evidence="3">
    <original>H</original>
    <variation>L</variation>
    <location>
        <position position="141"/>
    </location>
</feature>
<dbReference type="EMBL" id="U58991">
    <property type="protein sequence ID" value="AAC57053.1"/>
    <property type="molecule type" value="Genomic_DNA"/>
</dbReference>
<dbReference type="SMR" id="P89905"/>
<dbReference type="Proteomes" id="UP000259687">
    <property type="component" value="Segment"/>
</dbReference>
<dbReference type="GO" id="GO:0030430">
    <property type="term" value="C:host cell cytoplasm"/>
    <property type="evidence" value="ECO:0007669"/>
    <property type="project" value="UniProtKB-SubCell"/>
</dbReference>
<dbReference type="GO" id="GO:0020002">
    <property type="term" value="C:host cell plasma membrane"/>
    <property type="evidence" value="ECO:0007669"/>
    <property type="project" value="UniProtKB-SubCell"/>
</dbReference>
<dbReference type="GO" id="GO:0016020">
    <property type="term" value="C:membrane"/>
    <property type="evidence" value="ECO:0007669"/>
    <property type="project" value="UniProtKB-KW"/>
</dbReference>
<dbReference type="GO" id="GO:0044423">
    <property type="term" value="C:virion component"/>
    <property type="evidence" value="ECO:0007669"/>
    <property type="project" value="UniProtKB-KW"/>
</dbReference>
<dbReference type="GO" id="GO:0019058">
    <property type="term" value="P:viral life cycle"/>
    <property type="evidence" value="ECO:0007669"/>
    <property type="project" value="InterPro"/>
</dbReference>
<dbReference type="InterPro" id="IPR000475">
    <property type="entry name" value="Vif"/>
</dbReference>
<dbReference type="Pfam" id="PF00559">
    <property type="entry name" value="Vif"/>
    <property type="match status" value="1"/>
</dbReference>
<dbReference type="PRINTS" id="PR00349">
    <property type="entry name" value="VIRIONINFFCT"/>
</dbReference>
<comment type="function">
    <text evidence="1">Counteracts the innate antiviral activity of APOBEC3G. Forms a complex with host APOBEC3G thus preventing the entry of this lethally hypermutating enzyme into progeny virions. Functions as an adapter molecule, recruiting APOBEC3G to the ubiquitin-proteasome machinery. Targets APOBEC3G for degradation through the assembly with elongin BC complex, CUL5 and RBX1. Binds viral RNA and affects the stability of viral nucleoprotein core. May play a role in viral morphology (By similarity).</text>
</comment>
<comment type="subunit">
    <text evidence="1">Homomultimer; in vitro and presumably in vivo. Interacts with viral Pr55Gag precursor and host APOBEC3G. The interaction between Vif and APOBEC3G is species-specific, which may play a role in restricting the replication of SIV to their host. Forms an E3 ligase complex by interacting with host CUL5 and elongin BC complex (ELOB and ELOC) (By similarity).</text>
</comment>
<comment type="subcellular location">
    <subcellularLocation>
        <location evidence="1">Host cytoplasm</location>
    </subcellularLocation>
    <subcellularLocation>
        <location evidence="1">Host cell membrane</location>
        <topology evidence="1">Peripheral membrane protein</topology>
        <orientation evidence="1">Cytoplasmic side</orientation>
    </subcellularLocation>
    <subcellularLocation>
        <location evidence="1">Virion</location>
    </subcellularLocation>
    <text evidence="1">Seems to colocalize with intermediate filament vimentin. A fraction is associated with the cytoplasmic side of cellular membranes, presumably via the interaction with Pr55Gag precursor (By similarity).</text>
</comment>
<comment type="induction">
    <text>Expressed late during infection in a Rev-dependent manner.</text>
</comment>
<comment type="domain">
    <text evidence="1">The BC-like-box motif mediates the interaction with elongin BC complex.</text>
</comment>
<comment type="domain">
    <text evidence="1">The HCCH motif (H-x(5)-C-x(18)-C-x(5)-H) mediates the interaction with CUL5.</text>
</comment>
<comment type="PTM">
    <text evidence="1">Processed in virion by the viral protease.</text>
</comment>
<comment type="PTM">
    <text evidence="1">Highly phosphorylated on serine and threonine residues.</text>
</comment>
<comment type="PTM">
    <text evidence="1">Polyubiquitinated and degraded by the proteasome in the presence of APOBEC3G.</text>
</comment>
<comment type="miscellaneous">
    <text>Vif-defective viruses show catastrophic failure in reverse transcription due to APOBEC-induced mutations that initiate a DNA base repair pathway and compromise the structural integrity of the ssDNA. In the absence of Vif, the virion is morphologically abnormal.</text>
</comment>
<comment type="similarity">
    <text evidence="4">Belongs to the primate lentivirus group Vif protein family.</text>
</comment>
<proteinExistence type="evidence at protein level"/>
<evidence type="ECO:0000250" key="1"/>
<evidence type="ECO:0000256" key="2">
    <source>
        <dbReference type="SAM" id="MobiDB-lite"/>
    </source>
</evidence>
<evidence type="ECO:0000269" key="3">
    <source>
    </source>
</evidence>
<evidence type="ECO:0000305" key="4"/>
<reference key="1">
    <citation type="journal article" date="1997" name="Virology">
        <title>A full-length and replication-competent proviral clone of SIVAGM from tantalus monkeys.</title>
        <authorList>
            <person name="Soares M.A."/>
            <person name="Robertson D.L."/>
            <person name="Hui H."/>
            <person name="Allan J.S."/>
            <person name="Shaw G.M."/>
            <person name="Hahn B.H."/>
        </authorList>
    </citation>
    <scope>NUCLEOTIDE SEQUENCE [GENOMIC DNA]</scope>
    <source>
        <strain>tantalus-1</strain>
    </source>
</reference>
<reference key="2">
    <citation type="journal article" date="2005" name="Proc. Natl. Acad. Sci. U.S.A.">
        <title>Primate lentiviral virion infectivity factors are substrate receptors that assemble with cullin 5-E3 ligase through a HCCH motif to suppress APOBEC3G.</title>
        <authorList>
            <person name="Luo K."/>
            <person name="Xiao Z."/>
            <person name="Ehrlich E."/>
            <person name="Yu Y."/>
            <person name="Liu B."/>
            <person name="Zheng S."/>
            <person name="Yu X.-F."/>
        </authorList>
    </citation>
    <scope>INTERACTION WITH HUMAN CUL5</scope>
    <scope>MUTAGENESIS OF HIS-111; CYS-117; CYS-135 AND HIS-141</scope>
</reference>
<gene>
    <name type="primary">vif</name>
</gene>
<protein>
    <recommendedName>
        <fullName>Virion infectivity factor</fullName>
        <shortName>Vif</shortName>
    </recommendedName>
    <alternativeName>
        <fullName>Q protein</fullName>
    </alternativeName>
    <alternativeName>
        <fullName>SOR protein</fullName>
    </alternativeName>
</protein>
<name>VIF_SIVTA</name>
<keyword id="KW-1032">Host cell membrane</keyword>
<keyword id="KW-1035">Host cytoplasm</keyword>
<keyword id="KW-1043">Host membrane</keyword>
<keyword id="KW-0945">Host-virus interaction</keyword>
<keyword id="KW-0472">Membrane</keyword>
<keyword id="KW-0597">Phosphoprotein</keyword>
<keyword id="KW-1185">Reference proteome</keyword>
<keyword id="KW-0832">Ubl conjugation</keyword>
<keyword id="KW-0833">Ubl conjugation pathway</keyword>
<keyword id="KW-0946">Virion</keyword>
<organism>
    <name type="scientific">Simian immunodeficiency virus AGM.tantalus</name>
    <name type="common">SIV-agm.tan</name>
    <name type="synonym">Simian immunodeficiency virus African green monkey tantalus</name>
    <dbReference type="NCBI Taxonomy" id="349692"/>
    <lineage>
        <taxon>Viruses</taxon>
        <taxon>Riboviria</taxon>
        <taxon>Pararnavirae</taxon>
        <taxon>Artverviricota</taxon>
        <taxon>Revtraviricetes</taxon>
        <taxon>Ortervirales</taxon>
        <taxon>Retroviridae</taxon>
        <taxon>Orthoretrovirinae</taxon>
        <taxon>Lentivirus</taxon>
        <taxon>Simian immunodeficiency virus</taxon>
    </lineage>
</organism>
<accession>P89905</accession>
<organismHost>
    <name type="scientific">Chlorocebus tantalus</name>
    <name type="common">Tantalus monkey</name>
    <name type="synonym">Cercopithecus tantalus</name>
    <dbReference type="NCBI Taxonomy" id="60712"/>
</organismHost>
<sequence length="238" mass="28169">MEREKLWVTRLTWRVSGEHIDKWKGIVKYHMRNRLQDWTYLMHYQCGWAWYTCSRFLIPLGGEGKIVVDCYWHLTPEQGWLSTYAVAISFENWQNTYKTEVTPDVADHMIHCHYFPCFTDRAIQQAIRGESFLWCTYKEGHVAENHWGQVRSLQFLALTVYTDFLRNGRRKRFQGKKTRMVRNLGSQQGAVGRMIKRHGSRTQSGSTTPFWERTPLPSMELLSGRRGKEWGTNDRKGL</sequence>